<gene>
    <name evidence="1" type="primary">rimM</name>
    <name type="ordered locus">BAMEG_0651</name>
</gene>
<dbReference type="EMBL" id="CP001215">
    <property type="protein sequence ID" value="ACP14847.1"/>
    <property type="molecule type" value="Genomic_DNA"/>
</dbReference>
<dbReference type="RefSeq" id="WP_000170269.1">
    <property type="nucleotide sequence ID" value="NC_012581.1"/>
</dbReference>
<dbReference type="SMR" id="C3L785"/>
<dbReference type="GeneID" id="45023670"/>
<dbReference type="KEGG" id="bah:BAMEG_0651"/>
<dbReference type="HOGENOM" id="CLU_077636_3_1_9"/>
<dbReference type="GO" id="GO:0005737">
    <property type="term" value="C:cytoplasm"/>
    <property type="evidence" value="ECO:0007669"/>
    <property type="project" value="UniProtKB-SubCell"/>
</dbReference>
<dbReference type="GO" id="GO:0005840">
    <property type="term" value="C:ribosome"/>
    <property type="evidence" value="ECO:0007669"/>
    <property type="project" value="InterPro"/>
</dbReference>
<dbReference type="GO" id="GO:0043022">
    <property type="term" value="F:ribosome binding"/>
    <property type="evidence" value="ECO:0007669"/>
    <property type="project" value="InterPro"/>
</dbReference>
<dbReference type="GO" id="GO:0042274">
    <property type="term" value="P:ribosomal small subunit biogenesis"/>
    <property type="evidence" value="ECO:0007669"/>
    <property type="project" value="UniProtKB-UniRule"/>
</dbReference>
<dbReference type="GO" id="GO:0006364">
    <property type="term" value="P:rRNA processing"/>
    <property type="evidence" value="ECO:0007669"/>
    <property type="project" value="UniProtKB-UniRule"/>
</dbReference>
<dbReference type="Gene3D" id="2.30.30.240">
    <property type="entry name" value="PRC-barrel domain"/>
    <property type="match status" value="1"/>
</dbReference>
<dbReference type="Gene3D" id="2.40.30.60">
    <property type="entry name" value="RimM"/>
    <property type="match status" value="1"/>
</dbReference>
<dbReference type="HAMAP" id="MF_00014">
    <property type="entry name" value="Ribosome_mat_RimM"/>
    <property type="match status" value="1"/>
</dbReference>
<dbReference type="InterPro" id="IPR027275">
    <property type="entry name" value="PRC-brl_dom"/>
</dbReference>
<dbReference type="InterPro" id="IPR011033">
    <property type="entry name" value="PRC_barrel-like_sf"/>
</dbReference>
<dbReference type="InterPro" id="IPR011961">
    <property type="entry name" value="RimM"/>
</dbReference>
<dbReference type="InterPro" id="IPR002676">
    <property type="entry name" value="RimM_N"/>
</dbReference>
<dbReference type="InterPro" id="IPR036976">
    <property type="entry name" value="RimM_N_sf"/>
</dbReference>
<dbReference type="InterPro" id="IPR009000">
    <property type="entry name" value="Transl_B-barrel_sf"/>
</dbReference>
<dbReference type="NCBIfam" id="TIGR02273">
    <property type="entry name" value="16S_RimM"/>
    <property type="match status" value="1"/>
</dbReference>
<dbReference type="PANTHER" id="PTHR33692">
    <property type="entry name" value="RIBOSOME MATURATION FACTOR RIMM"/>
    <property type="match status" value="1"/>
</dbReference>
<dbReference type="PANTHER" id="PTHR33692:SF1">
    <property type="entry name" value="RIBOSOME MATURATION FACTOR RIMM"/>
    <property type="match status" value="1"/>
</dbReference>
<dbReference type="Pfam" id="PF05239">
    <property type="entry name" value="PRC"/>
    <property type="match status" value="1"/>
</dbReference>
<dbReference type="Pfam" id="PF01782">
    <property type="entry name" value="RimM"/>
    <property type="match status" value="1"/>
</dbReference>
<dbReference type="SUPFAM" id="SSF50346">
    <property type="entry name" value="PRC-barrel domain"/>
    <property type="match status" value="1"/>
</dbReference>
<dbReference type="SUPFAM" id="SSF50447">
    <property type="entry name" value="Translation proteins"/>
    <property type="match status" value="1"/>
</dbReference>
<feature type="chain" id="PRO_1000116560" description="Ribosome maturation factor RimM">
    <location>
        <begin position="1"/>
        <end position="171"/>
    </location>
</feature>
<feature type="domain" description="PRC barrel" evidence="1">
    <location>
        <begin position="96"/>
        <end position="170"/>
    </location>
</feature>
<accession>C3L785</accession>
<proteinExistence type="inferred from homology"/>
<organism>
    <name type="scientific">Bacillus anthracis (strain CDC 684 / NRRL 3495)</name>
    <dbReference type="NCBI Taxonomy" id="568206"/>
    <lineage>
        <taxon>Bacteria</taxon>
        <taxon>Bacillati</taxon>
        <taxon>Bacillota</taxon>
        <taxon>Bacilli</taxon>
        <taxon>Bacillales</taxon>
        <taxon>Bacillaceae</taxon>
        <taxon>Bacillus</taxon>
        <taxon>Bacillus cereus group</taxon>
    </lineage>
</organism>
<evidence type="ECO:0000255" key="1">
    <source>
        <dbReference type="HAMAP-Rule" id="MF_00014"/>
    </source>
</evidence>
<name>RIMM_BACAC</name>
<protein>
    <recommendedName>
        <fullName evidence="1">Ribosome maturation factor RimM</fullName>
    </recommendedName>
</protein>
<keyword id="KW-0143">Chaperone</keyword>
<keyword id="KW-0963">Cytoplasm</keyword>
<keyword id="KW-0690">Ribosome biogenesis</keyword>
<keyword id="KW-0698">rRNA processing</keyword>
<comment type="function">
    <text evidence="1">An accessory protein needed during the final step in the assembly of 30S ribosomal subunit, possibly for assembly of the head region. Essential for efficient processing of 16S rRNA. May be needed both before and after RbfA during the maturation of 16S rRNA. It has affinity for free ribosomal 30S subunits but not for 70S ribosomes.</text>
</comment>
<comment type="subunit">
    <text evidence="1">Binds ribosomal protein uS19.</text>
</comment>
<comment type="subcellular location">
    <subcellularLocation>
        <location evidence="1">Cytoplasm</location>
    </subcellularLocation>
</comment>
<comment type="domain">
    <text evidence="1">The PRC barrel domain binds ribosomal protein uS19.</text>
</comment>
<comment type="similarity">
    <text evidence="1">Belongs to the RimM family.</text>
</comment>
<sequence length="171" mass="19272">MTKWFNVGKIVNTHGVKGEIRVVSRTDFPEERYKVGNTLYISNEKGGEPFPVKITSHRQHKTFDLLTFEGYGNVNEVEQFKGSLLKVPEDQLGELAEGEYYYHEIIGCNVVTEEGEALGTIKEVLSPGANDVWVIKRPKGQDLLIPYIDDVVLQVNIENKLVTIHVTEGLL</sequence>
<reference key="1">
    <citation type="submission" date="2008-10" db="EMBL/GenBank/DDBJ databases">
        <title>Genome sequence of Bacillus anthracis str. CDC 684.</title>
        <authorList>
            <person name="Dodson R.J."/>
            <person name="Munk A.C."/>
            <person name="Brettin T."/>
            <person name="Bruce D."/>
            <person name="Detter C."/>
            <person name="Tapia R."/>
            <person name="Han C."/>
            <person name="Sutton G."/>
            <person name="Sims D."/>
        </authorList>
    </citation>
    <scope>NUCLEOTIDE SEQUENCE [LARGE SCALE GENOMIC DNA]</scope>
    <source>
        <strain>CDC 684 / NRRL 3495</strain>
    </source>
</reference>